<evidence type="ECO:0000250" key="1">
    <source>
        <dbReference type="UniProtKB" id="A0A1C9J6A7"/>
    </source>
</evidence>
<evidence type="ECO:0000250" key="2">
    <source>
        <dbReference type="UniProtKB" id="Q40577"/>
    </source>
</evidence>
<evidence type="ECO:0000255" key="3"/>
<evidence type="ECO:0000269" key="4">
    <source>
    </source>
</evidence>
<evidence type="ECO:0000303" key="5">
    <source>
    </source>
</evidence>
<evidence type="ECO:0000305" key="6"/>
<organism>
    <name type="scientific">Hedychium coronarium</name>
    <name type="common">White butterfly ginger-lily</name>
    <dbReference type="NCBI Taxonomy" id="71610"/>
    <lineage>
        <taxon>Eukaryota</taxon>
        <taxon>Viridiplantae</taxon>
        <taxon>Streptophyta</taxon>
        <taxon>Embryophyta</taxon>
        <taxon>Tracheophyta</taxon>
        <taxon>Spermatophyta</taxon>
        <taxon>Magnoliopsida</taxon>
        <taxon>Liliopsida</taxon>
        <taxon>Zingiberales</taxon>
        <taxon>Zingiberaceae</taxon>
        <taxon>Hedychium</taxon>
    </lineage>
</organism>
<keyword id="KW-0150">Chloroplast</keyword>
<keyword id="KW-0456">Lyase</keyword>
<keyword id="KW-0460">Magnesium</keyword>
<keyword id="KW-0479">Metal-binding</keyword>
<keyword id="KW-0934">Plastid</keyword>
<keyword id="KW-0809">Transit peptide</keyword>
<dbReference type="EC" id="4.2.3.81" evidence="4"/>
<dbReference type="EC" id="4.2.3.-" evidence="4"/>
<dbReference type="EC" id="4.2.3.55" evidence="4"/>
<dbReference type="EC" id="4.2.3.47" evidence="4"/>
<dbReference type="EC" id="4.2.3.123" evidence="4"/>
<dbReference type="EC" id="4.2.3.38" evidence="4"/>
<dbReference type="EC" id="4.2.3.25" evidence="4"/>
<dbReference type="EC" id="4.2.3.26" evidence="4"/>
<dbReference type="EMBL" id="KF358246">
    <property type="protein sequence ID" value="AGY49283.1"/>
    <property type="molecule type" value="mRNA"/>
</dbReference>
<dbReference type="SMR" id="U5PZT6"/>
<dbReference type="UniPathway" id="UPA00213"/>
<dbReference type="GO" id="GO:0009507">
    <property type="term" value="C:chloroplast"/>
    <property type="evidence" value="ECO:0000314"/>
    <property type="project" value="UniProtKB"/>
</dbReference>
<dbReference type="GO" id="GO:0000287">
    <property type="term" value="F:magnesium ion binding"/>
    <property type="evidence" value="ECO:0007669"/>
    <property type="project" value="InterPro"/>
</dbReference>
<dbReference type="GO" id="GO:0034008">
    <property type="term" value="F:R-linalool synthase activity"/>
    <property type="evidence" value="ECO:0000314"/>
    <property type="project" value="UniProtKB"/>
</dbReference>
<dbReference type="GO" id="GO:0034007">
    <property type="term" value="F:S-linalool synthase activity"/>
    <property type="evidence" value="ECO:0000314"/>
    <property type="project" value="UniProtKB"/>
</dbReference>
<dbReference type="GO" id="GO:0010333">
    <property type="term" value="F:terpene synthase activity"/>
    <property type="evidence" value="ECO:0000314"/>
    <property type="project" value="UniProtKB"/>
</dbReference>
<dbReference type="GO" id="GO:0016102">
    <property type="term" value="P:diterpenoid biosynthetic process"/>
    <property type="evidence" value="ECO:0007669"/>
    <property type="project" value="InterPro"/>
</dbReference>
<dbReference type="GO" id="GO:0010597">
    <property type="term" value="P:green leaf volatile biosynthetic process"/>
    <property type="evidence" value="ECO:0000314"/>
    <property type="project" value="UniProtKB"/>
</dbReference>
<dbReference type="GO" id="GO:0016099">
    <property type="term" value="P:monoterpenoid biosynthetic process"/>
    <property type="evidence" value="ECO:0000314"/>
    <property type="project" value="UniProtKB"/>
</dbReference>
<dbReference type="GO" id="GO:0051762">
    <property type="term" value="P:sesquiterpene biosynthetic process"/>
    <property type="evidence" value="ECO:0000314"/>
    <property type="project" value="UniProtKB"/>
</dbReference>
<dbReference type="CDD" id="cd00684">
    <property type="entry name" value="Terpene_cyclase_plant_C1"/>
    <property type="match status" value="1"/>
</dbReference>
<dbReference type="FunFam" id="1.10.600.10:FF:000007">
    <property type="entry name" value="Isoprene synthase, chloroplastic"/>
    <property type="match status" value="1"/>
</dbReference>
<dbReference type="Gene3D" id="1.10.600.10">
    <property type="entry name" value="Farnesyl Diphosphate Synthase"/>
    <property type="match status" value="1"/>
</dbReference>
<dbReference type="Gene3D" id="1.50.10.130">
    <property type="entry name" value="Terpene synthase, N-terminal domain"/>
    <property type="match status" value="1"/>
</dbReference>
<dbReference type="InterPro" id="IPR008949">
    <property type="entry name" value="Isoprenoid_synthase_dom_sf"/>
</dbReference>
<dbReference type="InterPro" id="IPR034741">
    <property type="entry name" value="Terpene_cyclase-like_1_C"/>
</dbReference>
<dbReference type="InterPro" id="IPR044814">
    <property type="entry name" value="Terpene_cyclase_plant_C1"/>
</dbReference>
<dbReference type="InterPro" id="IPR001906">
    <property type="entry name" value="Terpene_synth_N"/>
</dbReference>
<dbReference type="InterPro" id="IPR036965">
    <property type="entry name" value="Terpene_synth_N_sf"/>
</dbReference>
<dbReference type="InterPro" id="IPR050148">
    <property type="entry name" value="Terpene_synthase-like"/>
</dbReference>
<dbReference type="InterPro" id="IPR005630">
    <property type="entry name" value="Terpene_synthase_metal-bd"/>
</dbReference>
<dbReference type="InterPro" id="IPR008930">
    <property type="entry name" value="Terpenoid_cyclase/PrenylTrfase"/>
</dbReference>
<dbReference type="PANTHER" id="PTHR31225">
    <property type="entry name" value="OS04G0344100 PROTEIN-RELATED"/>
    <property type="match status" value="1"/>
</dbReference>
<dbReference type="PANTHER" id="PTHR31225:SF252">
    <property type="entry name" value="TERPENE SYNTHASE 12-RELATED"/>
    <property type="match status" value="1"/>
</dbReference>
<dbReference type="Pfam" id="PF01397">
    <property type="entry name" value="Terpene_synth"/>
    <property type="match status" value="1"/>
</dbReference>
<dbReference type="Pfam" id="PF03936">
    <property type="entry name" value="Terpene_synth_C"/>
    <property type="match status" value="1"/>
</dbReference>
<dbReference type="SFLD" id="SFLDS00005">
    <property type="entry name" value="Isoprenoid_Synthase_Type_I"/>
    <property type="match status" value="1"/>
</dbReference>
<dbReference type="SFLD" id="SFLDG01019">
    <property type="entry name" value="Terpene_Cyclase_Like_1_C_Termi"/>
    <property type="match status" value="1"/>
</dbReference>
<dbReference type="SUPFAM" id="SSF48239">
    <property type="entry name" value="Terpenoid cyclases/Protein prenyltransferases"/>
    <property type="match status" value="1"/>
</dbReference>
<dbReference type="SUPFAM" id="SSF48576">
    <property type="entry name" value="Terpenoid synthases"/>
    <property type="match status" value="1"/>
</dbReference>
<name>TPS8_HEDCO</name>
<protein>
    <recommendedName>
        <fullName evidence="5">Monoterpene synthase 8, chloroplastic</fullName>
        <shortName evidence="5">HcTPS8</shortName>
    </recommendedName>
    <alternativeName>
        <fullName evidence="5">Alpha-bergamotene synthase</fullName>
        <ecNumber evidence="4">4.2.3.81</ecNumber>
    </alternativeName>
    <alternativeName>
        <fullName evidence="5">Alpha-curcumene synthase</fullName>
        <ecNumber evidence="4">4.2.3.-</ecNumber>
    </alternativeName>
    <alternativeName>
        <fullName evidence="5">Beta-bisabolene synthase</fullName>
        <ecNumber evidence="4">4.2.3.55</ecNumber>
    </alternativeName>
    <alternativeName>
        <fullName evidence="5">Beta-farnesene synthase</fullName>
        <ecNumber evidence="4">4.2.3.47</ecNumber>
    </alternativeName>
    <alternativeName>
        <fullName evidence="5">Beta-sesquiphellandrene synthase</fullName>
        <ecNumber evidence="4">4.2.3.123</ecNumber>
    </alternativeName>
    <alternativeName>
        <fullName evidence="5">Cis-alpha-bisabolene synthase</fullName>
        <ecNumber evidence="4">4.2.3.38</ecNumber>
    </alternativeName>
    <alternativeName>
        <fullName evidence="5">Linalool synthase</fullName>
        <ecNumber evidence="4">4.2.3.25</ecNumber>
        <ecNumber evidence="4">4.2.3.26</ecNumber>
    </alternativeName>
</protein>
<reference key="1">
    <citation type="journal article" date="2014" name="Planta">
        <title>Characterization of two monoterpene synthases involved in floral scent formation in Hedychium coronarium.</title>
        <authorList>
            <person name="Yue Y."/>
            <person name="Yu R."/>
            <person name="Fan Y."/>
        </authorList>
    </citation>
    <scope>NUCLEOTIDE SEQUENCE [MRNA]</scope>
    <scope>FUNCTION</scope>
    <scope>CATALYTIC ACTIVITY</scope>
    <scope>PATHWAY</scope>
    <scope>SUBCELLULAR LOCATION</scope>
    <scope>TISSUE SPECIFICITY</scope>
    <scope>DEVELOPMENTAL STAGE</scope>
    <scope>BIOPHYSICOCHEMICAL PROPERTIES</scope>
    <scope>COFACTOR</scope>
</reference>
<sequence>MSLLLAPPSYFPFRGLRRSTAAKQPPCLRLVKCTADRQSPEAARRSAHYQPNMWSDDYIQSLTVESPLKVEEKEQTKKLMLLKERIAEVICEGKEVEEQLRLIDHLQQLGVAYHFKDDIKASLRNIHSSLEEISSTIIFKDGLHASALLFRLLRENGFSISEDIFEEFRDEKGQYFRSDGLKNQTDQAMLSLYEASYYEKDGEMVLQEAMECTTKHLENLLEEEGSDLKLKEQAAHALELPLNWRMERLHARWFIEACQREVMVIDNPLLLEFAKLDFNAVQSIYKKELSALSRWWTKLGVVEKLPFARDRLTENYLWTVGWAFEPEHWSFRDAQTKGNCFVTMIDDVYDVYGTLDELELFTHVVDRWDINAIDQLPDYMKILFLALFNTVNDDGYKVMKEKGLDVIPYLKRSWADLCKAYLVEAKWYHRGYKPTINEYLDNTWISISGPAIFTNAYCMANNLTKQDLERFSEYPAIAKHSSMLGRLYNDLATSTAEIERGDVPKSIQCCMHERGVSEGVAREQVKELIRGNWRCMNGDRAAASSFEEMLKTVAVDIARASQFFYHNGDKYGKADGETMTQVMSLLINPII</sequence>
<accession>U5PZT6</accession>
<gene>
    <name evidence="5" type="primary">TPS8</name>
</gene>
<proteinExistence type="evidence at protein level"/>
<feature type="transit peptide" description="Chloroplast" evidence="3">
    <location>
        <begin position="1"/>
        <end position="46"/>
    </location>
</feature>
<feature type="chain" id="PRO_0000454955" description="Monoterpene synthase 8, chloroplastic">
    <location>
        <begin position="47"/>
        <end position="591"/>
    </location>
</feature>
<feature type="short sequence motif" description="DDXXD motif" evidence="1">
    <location>
        <begin position="346"/>
        <end position="350"/>
    </location>
</feature>
<feature type="binding site" evidence="2">
    <location>
        <position position="346"/>
    </location>
    <ligand>
        <name>Mg(2+)</name>
        <dbReference type="ChEBI" id="CHEBI:18420"/>
        <label>1</label>
    </ligand>
</feature>
<feature type="binding site" evidence="2">
    <location>
        <position position="346"/>
    </location>
    <ligand>
        <name>Mg(2+)</name>
        <dbReference type="ChEBI" id="CHEBI:18420"/>
        <label>2</label>
    </ligand>
</feature>
<feature type="binding site" evidence="2">
    <location>
        <position position="350"/>
    </location>
    <ligand>
        <name>Mg(2+)</name>
        <dbReference type="ChEBI" id="CHEBI:18420"/>
        <label>1</label>
    </ligand>
</feature>
<feature type="binding site" evidence="2">
    <location>
        <position position="350"/>
    </location>
    <ligand>
        <name>Mg(2+)</name>
        <dbReference type="ChEBI" id="CHEBI:18420"/>
        <label>2</label>
    </ligand>
</feature>
<feature type="binding site" evidence="2">
    <location>
        <position position="497"/>
    </location>
    <ligand>
        <name>Mg(2+)</name>
        <dbReference type="ChEBI" id="CHEBI:18420"/>
        <label>3</label>
    </ligand>
</feature>
<comment type="function">
    <text evidence="4">Sesquiterpene and monoterpene synthase involved in the biosynthesis of volatile compounds present in floral scent (PubMed:25056927). Mediates the conversion of (2E)-geranyl diphosphate (GPP) into linalool, with trace levels of myrcene, limonene and (Z)-beta-ocimene (PubMed:25056927). Also acts as a sesquiterpene synthase by catalyzing the conversion of farnesyl diphosphate (FPP) to alpha-bergamotene and beta-bisabolene and to minor products including alpha-curcumene, cis-alpha-bisabolene, beta-farnesene and beta-sesquiphellandrene, as well as seven other unidentified sesquiterpenes (PubMed:25056927).</text>
</comment>
<comment type="catalytic activity">
    <reaction evidence="4">
        <text>(2E)-geranyl diphosphate + H2O = (R)-linalool + diphosphate</text>
        <dbReference type="Rhea" id="RHEA:15809"/>
        <dbReference type="ChEBI" id="CHEBI:28"/>
        <dbReference type="ChEBI" id="CHEBI:15377"/>
        <dbReference type="ChEBI" id="CHEBI:33019"/>
        <dbReference type="ChEBI" id="CHEBI:58057"/>
        <dbReference type="EC" id="4.2.3.26"/>
    </reaction>
    <physiologicalReaction direction="left-to-right" evidence="4">
        <dbReference type="Rhea" id="RHEA:15810"/>
    </physiologicalReaction>
</comment>
<comment type="catalytic activity">
    <reaction evidence="4">
        <text>(2E)-geranyl diphosphate + H2O = (S)-linalool + diphosphate</text>
        <dbReference type="Rhea" id="RHEA:24116"/>
        <dbReference type="ChEBI" id="CHEBI:98"/>
        <dbReference type="ChEBI" id="CHEBI:15377"/>
        <dbReference type="ChEBI" id="CHEBI:33019"/>
        <dbReference type="ChEBI" id="CHEBI:58057"/>
        <dbReference type="EC" id="4.2.3.25"/>
    </reaction>
    <physiologicalReaction direction="left-to-right" evidence="4">
        <dbReference type="Rhea" id="RHEA:24117"/>
    </physiologicalReaction>
</comment>
<comment type="catalytic activity">
    <reaction evidence="4">
        <text>(2E,6E)-farnesyl diphosphate = (S)-beta-bisabolene + diphosphate</text>
        <dbReference type="Rhea" id="RHEA:28266"/>
        <dbReference type="ChEBI" id="CHEBI:33019"/>
        <dbReference type="ChEBI" id="CHEBI:49263"/>
        <dbReference type="ChEBI" id="CHEBI:175763"/>
        <dbReference type="EC" id="4.2.3.55"/>
    </reaction>
    <physiologicalReaction direction="left-to-right" evidence="4">
        <dbReference type="Rhea" id="RHEA:28267"/>
    </physiologicalReaction>
</comment>
<comment type="catalytic activity">
    <reaction evidence="4">
        <text>(2E,6E)-farnesyl diphosphate = (E,R)-alpha-bisabolene + diphosphate</text>
        <dbReference type="Rhea" id="RHEA:25436"/>
        <dbReference type="ChEBI" id="CHEBI:33019"/>
        <dbReference type="ChEBI" id="CHEBI:49243"/>
        <dbReference type="ChEBI" id="CHEBI:175763"/>
        <dbReference type="EC" id="4.2.3.38"/>
    </reaction>
    <physiologicalReaction direction="left-to-right" evidence="4">
        <dbReference type="Rhea" id="RHEA:25437"/>
    </physiologicalReaction>
</comment>
<comment type="catalytic activity">
    <reaction evidence="4">
        <text>(2E,6E)-farnesyl diphosphate = (E)-beta-farnesene + diphosphate</text>
        <dbReference type="Rhea" id="RHEA:27425"/>
        <dbReference type="ChEBI" id="CHEBI:10418"/>
        <dbReference type="ChEBI" id="CHEBI:33019"/>
        <dbReference type="ChEBI" id="CHEBI:175763"/>
        <dbReference type="EC" id="4.2.3.47"/>
    </reaction>
    <physiologicalReaction direction="left-to-right" evidence="4">
        <dbReference type="Rhea" id="RHEA:27426"/>
    </physiologicalReaction>
</comment>
<comment type="catalytic activity">
    <reaction evidence="4">
        <text>(2E,6E)-farnesyl diphosphate = beta-sesquiphellandrene + diphosphate</text>
        <dbReference type="Rhea" id="RHEA:32699"/>
        <dbReference type="ChEBI" id="CHEBI:33019"/>
        <dbReference type="ChEBI" id="CHEBI:64361"/>
        <dbReference type="ChEBI" id="CHEBI:175763"/>
        <dbReference type="EC" id="4.2.3.123"/>
    </reaction>
    <physiologicalReaction direction="left-to-right" evidence="4">
        <dbReference type="Rhea" id="RHEA:32700"/>
    </physiologicalReaction>
</comment>
<comment type="catalytic activity">
    <reaction evidence="4">
        <text>(2E,6E)-farnesyl diphosphate = (1S,5S,6R)-alpha-bergamotene + diphosphate</text>
        <dbReference type="Rhea" id="RHEA:31427"/>
        <dbReference type="ChEBI" id="CHEBI:33019"/>
        <dbReference type="ChEBI" id="CHEBI:62756"/>
        <dbReference type="ChEBI" id="CHEBI:175763"/>
        <dbReference type="EC" id="4.2.3.81"/>
    </reaction>
    <physiologicalReaction direction="left-to-right" evidence="4">
        <dbReference type="Rhea" id="RHEA:31428"/>
    </physiologicalReaction>
</comment>
<comment type="cofactor">
    <cofactor evidence="4">
        <name>Mg(2+)</name>
        <dbReference type="ChEBI" id="CHEBI:18420"/>
    </cofactor>
    <cofactor evidence="4">
        <name>Mn(2+)</name>
        <dbReference type="ChEBI" id="CHEBI:29035"/>
    </cofactor>
    <text evidence="1">Binds 3 Mg(2+) or Mn(2+) ions per subunit.</text>
</comment>
<comment type="biophysicochemical properties">
    <kinetics>
        <KM evidence="4">673 uM for Mg(2+)</KM>
        <KM evidence="4">35 uM for Mn(2+)</KM>
        <KM evidence="4">20.54 uM for (2E)-geranyl diphosphate</KM>
        <Vmax evidence="4">1272.33 pmol/sec/mg enzyme with (2E)-geranyl diphosphate as substrate</Vmax>
        <text evidence="4">kcat is 0.088 sec(-1) with (2E)-geranyl diphosphate as substrate.</text>
    </kinetics>
    <phDependence>
        <text evidence="4">Optimum pH is 7.5 (PubMed:25056927). Active at pH between 6.0 and 9.0 (PubMed:25056927).</text>
    </phDependence>
    <temperatureDependence>
        <text evidence="4">Optimum temperature is 30 degrees Celsius.</text>
    </temperatureDependence>
</comment>
<comment type="pathway">
    <text evidence="4">Secondary metabolite biosynthesis; terpenoid biosynthesis.</text>
</comment>
<comment type="subcellular location">
    <subcellularLocation>
        <location evidence="4">Plastid</location>
        <location evidence="4">Chloroplast</location>
    </subcellularLocation>
</comment>
<comment type="tissue specificity">
    <text evidence="4">Highly expressed in flowers, petals and sepals, but almost undetectable in vegetative organs.</text>
</comment>
<comment type="developmental stage">
    <text evidence="4">During flower development, Progressive accumlation in petals during the first 40 hours, peaking at full bloom, and fades out from 40 to 64 hours.</text>
</comment>
<comment type="domain">
    <text evidence="2">The Asp-Asp-Xaa-Xaa-Asp/Glu (DDXXD/E) motif is important for the catalytic activity, presumably through binding to Mg(2+).</text>
</comment>
<comment type="similarity">
    <text evidence="6">Belongs to the terpene synthase family. Tpsa subfamily.</text>
</comment>